<keyword id="KW-0068">Autocatalytic cleavage</keyword>
<keyword id="KW-0963">Cytoplasm</keyword>
<keyword id="KW-0210">Decarboxylase</keyword>
<keyword id="KW-0456">Lyase</keyword>
<keyword id="KW-0566">Pantothenate biosynthesis</keyword>
<keyword id="KW-0670">Pyruvate</keyword>
<keyword id="KW-1185">Reference proteome</keyword>
<keyword id="KW-0704">Schiff base</keyword>
<keyword id="KW-0865">Zymogen</keyword>
<sequence length="154" mass="16409">MIYREMLKSKIHRAVVRQADLHYVGSITIDATLMAAAGLWPGEKVDVLDITNGARLSTYVIEGEADSGTIGINGAAAHLISPGDLVIIVGYALMAEEDARSYQPNVVFVNGDNQLVRMGTDPAEAYDGVGLVRGDTNSPQPSLSEQAGDPRRAQ</sequence>
<protein>
    <recommendedName>
        <fullName evidence="1">Aspartate 1-decarboxylase 1</fullName>
        <ecNumber evidence="1">4.1.1.11</ecNumber>
    </recommendedName>
    <alternativeName>
        <fullName evidence="1">Aspartate alpha-decarboxylase 1</fullName>
    </alternativeName>
    <component>
        <recommendedName>
            <fullName evidence="1">Aspartate 1-decarboxylase beta chain</fullName>
        </recommendedName>
    </component>
    <component>
        <recommendedName>
            <fullName evidence="1">Aspartate 1-decarboxylase alpha chain</fullName>
        </recommendedName>
    </component>
</protein>
<gene>
    <name evidence="1" type="primary">panD1</name>
    <name type="ordered locus">Francci3_1112</name>
</gene>
<dbReference type="EC" id="4.1.1.11" evidence="1"/>
<dbReference type="EMBL" id="CP000249">
    <property type="protein sequence ID" value="ABD10492.1"/>
    <property type="molecule type" value="Genomic_DNA"/>
</dbReference>
<dbReference type="SMR" id="Q2JE00"/>
<dbReference type="STRING" id="106370.Francci3_1112"/>
<dbReference type="KEGG" id="fra:Francci3_1112"/>
<dbReference type="eggNOG" id="COG0853">
    <property type="taxonomic scope" value="Bacteria"/>
</dbReference>
<dbReference type="HOGENOM" id="CLU_115305_0_0_11"/>
<dbReference type="PhylomeDB" id="Q2JE00"/>
<dbReference type="UniPathway" id="UPA00028">
    <property type="reaction ID" value="UER00002"/>
</dbReference>
<dbReference type="Proteomes" id="UP000001937">
    <property type="component" value="Chromosome"/>
</dbReference>
<dbReference type="GO" id="GO:0005829">
    <property type="term" value="C:cytosol"/>
    <property type="evidence" value="ECO:0007669"/>
    <property type="project" value="TreeGrafter"/>
</dbReference>
<dbReference type="GO" id="GO:0004068">
    <property type="term" value="F:aspartate 1-decarboxylase activity"/>
    <property type="evidence" value="ECO:0007669"/>
    <property type="project" value="UniProtKB-UniRule"/>
</dbReference>
<dbReference type="GO" id="GO:0006523">
    <property type="term" value="P:alanine biosynthetic process"/>
    <property type="evidence" value="ECO:0007669"/>
    <property type="project" value="InterPro"/>
</dbReference>
<dbReference type="GO" id="GO:0015940">
    <property type="term" value="P:pantothenate biosynthetic process"/>
    <property type="evidence" value="ECO:0007669"/>
    <property type="project" value="UniProtKB-UniRule"/>
</dbReference>
<dbReference type="CDD" id="cd06919">
    <property type="entry name" value="Asp_decarbox"/>
    <property type="match status" value="1"/>
</dbReference>
<dbReference type="Gene3D" id="2.40.40.20">
    <property type="match status" value="1"/>
</dbReference>
<dbReference type="HAMAP" id="MF_00446">
    <property type="entry name" value="PanD"/>
    <property type="match status" value="1"/>
</dbReference>
<dbReference type="InterPro" id="IPR009010">
    <property type="entry name" value="Asp_de-COase-like_dom_sf"/>
</dbReference>
<dbReference type="InterPro" id="IPR003190">
    <property type="entry name" value="Asp_decarbox"/>
</dbReference>
<dbReference type="NCBIfam" id="TIGR00223">
    <property type="entry name" value="panD"/>
    <property type="match status" value="1"/>
</dbReference>
<dbReference type="PANTHER" id="PTHR21012">
    <property type="entry name" value="ASPARTATE 1-DECARBOXYLASE"/>
    <property type="match status" value="1"/>
</dbReference>
<dbReference type="PANTHER" id="PTHR21012:SF0">
    <property type="entry name" value="ASPARTATE 1-DECARBOXYLASE"/>
    <property type="match status" value="1"/>
</dbReference>
<dbReference type="Pfam" id="PF02261">
    <property type="entry name" value="Asp_decarbox"/>
    <property type="match status" value="1"/>
</dbReference>
<dbReference type="SUPFAM" id="SSF50692">
    <property type="entry name" value="ADC-like"/>
    <property type="match status" value="1"/>
</dbReference>
<organism>
    <name type="scientific">Frankia casuarinae (strain DSM 45818 / CECT 9043 / HFP020203 / CcI3)</name>
    <dbReference type="NCBI Taxonomy" id="106370"/>
    <lineage>
        <taxon>Bacteria</taxon>
        <taxon>Bacillati</taxon>
        <taxon>Actinomycetota</taxon>
        <taxon>Actinomycetes</taxon>
        <taxon>Frankiales</taxon>
        <taxon>Frankiaceae</taxon>
        <taxon>Frankia</taxon>
    </lineage>
</organism>
<evidence type="ECO:0000255" key="1">
    <source>
        <dbReference type="HAMAP-Rule" id="MF_00446"/>
    </source>
</evidence>
<evidence type="ECO:0000256" key="2">
    <source>
        <dbReference type="SAM" id="MobiDB-lite"/>
    </source>
</evidence>
<accession>Q2JE00</accession>
<proteinExistence type="inferred from homology"/>
<reference key="1">
    <citation type="journal article" date="2007" name="Genome Res.">
        <title>Genome characteristics of facultatively symbiotic Frankia sp. strains reflect host range and host plant biogeography.</title>
        <authorList>
            <person name="Normand P."/>
            <person name="Lapierre P."/>
            <person name="Tisa L.S."/>
            <person name="Gogarten J.P."/>
            <person name="Alloisio N."/>
            <person name="Bagnarol E."/>
            <person name="Bassi C.A."/>
            <person name="Berry A.M."/>
            <person name="Bickhart D.M."/>
            <person name="Choisne N."/>
            <person name="Couloux A."/>
            <person name="Cournoyer B."/>
            <person name="Cruveiller S."/>
            <person name="Daubin V."/>
            <person name="Demange N."/>
            <person name="Francino M.P."/>
            <person name="Goltsman E."/>
            <person name="Huang Y."/>
            <person name="Kopp O.R."/>
            <person name="Labarre L."/>
            <person name="Lapidus A."/>
            <person name="Lavire C."/>
            <person name="Marechal J."/>
            <person name="Martinez M."/>
            <person name="Mastronunzio J.E."/>
            <person name="Mullin B.C."/>
            <person name="Niemann J."/>
            <person name="Pujic P."/>
            <person name="Rawnsley T."/>
            <person name="Rouy Z."/>
            <person name="Schenowitz C."/>
            <person name="Sellstedt A."/>
            <person name="Tavares F."/>
            <person name="Tomkins J.P."/>
            <person name="Vallenet D."/>
            <person name="Valverde C."/>
            <person name="Wall L.G."/>
            <person name="Wang Y."/>
            <person name="Medigue C."/>
            <person name="Benson D.R."/>
        </authorList>
    </citation>
    <scope>NUCLEOTIDE SEQUENCE [LARGE SCALE GENOMIC DNA]</scope>
    <source>
        <strain>DSM 45818 / CECT 9043 / HFP020203 / CcI3</strain>
    </source>
</reference>
<name>PAND1_FRACC</name>
<comment type="function">
    <text evidence="1">Catalyzes the pyruvoyl-dependent decarboxylation of aspartate to produce beta-alanine.</text>
</comment>
<comment type="catalytic activity">
    <reaction evidence="1">
        <text>L-aspartate + H(+) = beta-alanine + CO2</text>
        <dbReference type="Rhea" id="RHEA:19497"/>
        <dbReference type="ChEBI" id="CHEBI:15378"/>
        <dbReference type="ChEBI" id="CHEBI:16526"/>
        <dbReference type="ChEBI" id="CHEBI:29991"/>
        <dbReference type="ChEBI" id="CHEBI:57966"/>
        <dbReference type="EC" id="4.1.1.11"/>
    </reaction>
</comment>
<comment type="cofactor">
    <cofactor evidence="1">
        <name>pyruvate</name>
        <dbReference type="ChEBI" id="CHEBI:15361"/>
    </cofactor>
    <text evidence="1">Binds 1 pyruvoyl group covalently per subunit.</text>
</comment>
<comment type="pathway">
    <text evidence="1">Cofactor biosynthesis; (R)-pantothenate biosynthesis; beta-alanine from L-aspartate: step 1/1.</text>
</comment>
<comment type="subunit">
    <text evidence="1">Heterooctamer of four alpha and four beta subunits.</text>
</comment>
<comment type="subcellular location">
    <subcellularLocation>
        <location evidence="1">Cytoplasm</location>
    </subcellularLocation>
</comment>
<comment type="PTM">
    <text evidence="1">Is synthesized initially as an inactive proenzyme, which is activated by self-cleavage at a specific serine bond to produce a beta-subunit with a hydroxyl group at its C-terminus and an alpha-subunit with a pyruvoyl group at its N-terminus.</text>
</comment>
<comment type="similarity">
    <text evidence="1">Belongs to the PanD family.</text>
</comment>
<feature type="chain" id="PRO_0000236871" description="Aspartate 1-decarboxylase beta chain" evidence="1">
    <location>
        <begin position="1"/>
        <end position="25"/>
    </location>
</feature>
<feature type="chain" id="PRO_0000236872" description="Aspartate 1-decarboxylase alpha chain" evidence="1">
    <location>
        <begin position="26"/>
        <end position="154"/>
    </location>
</feature>
<feature type="region of interest" description="Disordered" evidence="2">
    <location>
        <begin position="129"/>
        <end position="154"/>
    </location>
</feature>
<feature type="compositionally biased region" description="Polar residues" evidence="2">
    <location>
        <begin position="135"/>
        <end position="145"/>
    </location>
</feature>
<feature type="active site" description="Schiff-base intermediate with substrate; via pyruvic acid" evidence="1">
    <location>
        <position position="26"/>
    </location>
</feature>
<feature type="active site" description="Proton donor" evidence="1">
    <location>
        <position position="59"/>
    </location>
</feature>
<feature type="binding site" evidence="1">
    <location>
        <position position="58"/>
    </location>
    <ligand>
        <name>substrate</name>
    </ligand>
</feature>
<feature type="binding site" evidence="1">
    <location>
        <begin position="74"/>
        <end position="76"/>
    </location>
    <ligand>
        <name>substrate</name>
    </ligand>
</feature>
<feature type="modified residue" description="Pyruvic acid (Ser)" evidence="1">
    <location>
        <position position="26"/>
    </location>
</feature>